<feature type="chain" id="PRO_0000327631" description="Coiled-coil domain-containing protein 124 homolog">
    <location>
        <begin position="1"/>
        <end position="247"/>
    </location>
</feature>
<feature type="region of interest" description="Disordered" evidence="3">
    <location>
        <begin position="1"/>
        <end position="146"/>
    </location>
</feature>
<feature type="coiled-coil region" evidence="2">
    <location>
        <begin position="8"/>
        <end position="85"/>
    </location>
</feature>
<feature type="compositionally biased region" description="Basic and acidic residues" evidence="3">
    <location>
        <begin position="11"/>
        <end position="114"/>
    </location>
</feature>
<feature type="compositionally biased region" description="Low complexity" evidence="3">
    <location>
        <begin position="122"/>
        <end position="140"/>
    </location>
</feature>
<protein>
    <recommendedName>
        <fullName>Coiled-coil domain-containing protein 124 homolog</fullName>
    </recommendedName>
</protein>
<comment type="function">
    <text evidence="1">Ribosome-binding protein involved in ribosome hibernation: associates with translationally inactive ribosomes and stabilizes the nonrotated conformation of the 80S ribosome, thereby promoting ribosome preservation and storage.</text>
</comment>
<comment type="subunit">
    <text evidence="1">Associates with translationally inactive ribosomes in the nonrotated state.</text>
</comment>
<comment type="similarity">
    <text evidence="4">Belongs to the CCDC124 family.</text>
</comment>
<proteinExistence type="inferred from homology"/>
<accession>Q54GW3</accession>
<gene>
    <name type="ORF">DDB_G0289893</name>
</gene>
<dbReference type="EMBL" id="AAFI02000149">
    <property type="protein sequence ID" value="EAL62459.1"/>
    <property type="molecule type" value="Genomic_DNA"/>
</dbReference>
<dbReference type="RefSeq" id="XP_635956.1">
    <property type="nucleotide sequence ID" value="XM_630864.1"/>
</dbReference>
<dbReference type="SMR" id="Q54GW3"/>
<dbReference type="FunCoup" id="Q54GW3">
    <property type="interactions" value="5"/>
</dbReference>
<dbReference type="STRING" id="44689.Q54GW3"/>
<dbReference type="PaxDb" id="44689-DDB0305172"/>
<dbReference type="EnsemblProtists" id="EAL62459">
    <property type="protein sequence ID" value="EAL62459"/>
    <property type="gene ID" value="DDB_G0289893"/>
</dbReference>
<dbReference type="GeneID" id="8627371"/>
<dbReference type="KEGG" id="ddi:DDB_G0289893"/>
<dbReference type="dictyBase" id="DDB_G0289893">
    <property type="gene designation" value="ccdc124"/>
</dbReference>
<dbReference type="VEuPathDB" id="AmoebaDB:DDB_G0289893"/>
<dbReference type="eggNOG" id="KOG3223">
    <property type="taxonomic scope" value="Eukaryota"/>
</dbReference>
<dbReference type="HOGENOM" id="CLU_069723_0_1_1"/>
<dbReference type="InParanoid" id="Q54GW3"/>
<dbReference type="OMA" id="FEERMMP"/>
<dbReference type="PhylomeDB" id="Q54GW3"/>
<dbReference type="PRO" id="PR:Q54GW3"/>
<dbReference type="Proteomes" id="UP000002195">
    <property type="component" value="Chromosome 5"/>
</dbReference>
<dbReference type="GO" id="GO:0005634">
    <property type="term" value="C:nucleus"/>
    <property type="evidence" value="ECO:0000318"/>
    <property type="project" value="GO_Central"/>
</dbReference>
<dbReference type="GO" id="GO:0003713">
    <property type="term" value="F:transcription coactivator activity"/>
    <property type="evidence" value="ECO:0000318"/>
    <property type="project" value="GO_Central"/>
</dbReference>
<dbReference type="GO" id="GO:0006366">
    <property type="term" value="P:transcription by RNA polymerase II"/>
    <property type="evidence" value="ECO:0000318"/>
    <property type="project" value="GO_Central"/>
</dbReference>
<dbReference type="InterPro" id="IPR010422">
    <property type="entry name" value="Ccdc124/Oxs1"/>
</dbReference>
<dbReference type="InterPro" id="IPR054414">
    <property type="entry name" value="Ccdc124/Oxs1_C"/>
</dbReference>
<dbReference type="PANTHER" id="PTHR21680">
    <property type="entry name" value="COILED-COIL DOMAIN-CONTAINING PROTEIN 124"/>
    <property type="match status" value="1"/>
</dbReference>
<dbReference type="PANTHER" id="PTHR21680:SF0">
    <property type="entry name" value="COILED-COIL DOMAIN-CONTAINING PROTEIN 124"/>
    <property type="match status" value="1"/>
</dbReference>
<dbReference type="Pfam" id="PF06244">
    <property type="entry name" value="Ccdc124"/>
    <property type="match status" value="1"/>
</dbReference>
<keyword id="KW-0175">Coiled coil</keyword>
<keyword id="KW-1185">Reference proteome</keyword>
<reference key="1">
    <citation type="journal article" date="2005" name="Nature">
        <title>The genome of the social amoeba Dictyostelium discoideum.</title>
        <authorList>
            <person name="Eichinger L."/>
            <person name="Pachebat J.A."/>
            <person name="Gloeckner G."/>
            <person name="Rajandream M.A."/>
            <person name="Sucgang R."/>
            <person name="Berriman M."/>
            <person name="Song J."/>
            <person name="Olsen R."/>
            <person name="Szafranski K."/>
            <person name="Xu Q."/>
            <person name="Tunggal B."/>
            <person name="Kummerfeld S."/>
            <person name="Madera M."/>
            <person name="Konfortov B.A."/>
            <person name="Rivero F."/>
            <person name="Bankier A.T."/>
            <person name="Lehmann R."/>
            <person name="Hamlin N."/>
            <person name="Davies R."/>
            <person name="Gaudet P."/>
            <person name="Fey P."/>
            <person name="Pilcher K."/>
            <person name="Chen G."/>
            <person name="Saunders D."/>
            <person name="Sodergren E.J."/>
            <person name="Davis P."/>
            <person name="Kerhornou A."/>
            <person name="Nie X."/>
            <person name="Hall N."/>
            <person name="Anjard C."/>
            <person name="Hemphill L."/>
            <person name="Bason N."/>
            <person name="Farbrother P."/>
            <person name="Desany B."/>
            <person name="Just E."/>
            <person name="Morio T."/>
            <person name="Rost R."/>
            <person name="Churcher C.M."/>
            <person name="Cooper J."/>
            <person name="Haydock S."/>
            <person name="van Driessche N."/>
            <person name="Cronin A."/>
            <person name="Goodhead I."/>
            <person name="Muzny D.M."/>
            <person name="Mourier T."/>
            <person name="Pain A."/>
            <person name="Lu M."/>
            <person name="Harper D."/>
            <person name="Lindsay R."/>
            <person name="Hauser H."/>
            <person name="James K.D."/>
            <person name="Quiles M."/>
            <person name="Madan Babu M."/>
            <person name="Saito T."/>
            <person name="Buchrieser C."/>
            <person name="Wardroper A."/>
            <person name="Felder M."/>
            <person name="Thangavelu M."/>
            <person name="Johnson D."/>
            <person name="Knights A."/>
            <person name="Loulseged H."/>
            <person name="Mungall K.L."/>
            <person name="Oliver K."/>
            <person name="Price C."/>
            <person name="Quail M.A."/>
            <person name="Urushihara H."/>
            <person name="Hernandez J."/>
            <person name="Rabbinowitsch E."/>
            <person name="Steffen D."/>
            <person name="Sanders M."/>
            <person name="Ma J."/>
            <person name="Kohara Y."/>
            <person name="Sharp S."/>
            <person name="Simmonds M.N."/>
            <person name="Spiegler S."/>
            <person name="Tivey A."/>
            <person name="Sugano S."/>
            <person name="White B."/>
            <person name="Walker D."/>
            <person name="Woodward J.R."/>
            <person name="Winckler T."/>
            <person name="Tanaka Y."/>
            <person name="Shaulsky G."/>
            <person name="Schleicher M."/>
            <person name="Weinstock G.M."/>
            <person name="Rosenthal A."/>
            <person name="Cox E.C."/>
            <person name="Chisholm R.L."/>
            <person name="Gibbs R.A."/>
            <person name="Loomis W.F."/>
            <person name="Platzer M."/>
            <person name="Kay R.R."/>
            <person name="Williams J.G."/>
            <person name="Dear P.H."/>
            <person name="Noegel A.A."/>
            <person name="Barrell B.G."/>
            <person name="Kuspa A."/>
        </authorList>
    </citation>
    <scope>NUCLEOTIDE SEQUENCE [LARGE SCALE GENOMIC DNA]</scope>
    <source>
        <strain>AX4</strain>
    </source>
</reference>
<organism>
    <name type="scientific">Dictyostelium discoideum</name>
    <name type="common">Social amoeba</name>
    <dbReference type="NCBI Taxonomy" id="44689"/>
    <lineage>
        <taxon>Eukaryota</taxon>
        <taxon>Amoebozoa</taxon>
        <taxon>Evosea</taxon>
        <taxon>Eumycetozoa</taxon>
        <taxon>Dictyostelia</taxon>
        <taxon>Dictyosteliales</taxon>
        <taxon>Dictyosteliaceae</taxon>
        <taxon>Dictyostelium</taxon>
    </lineage>
</organism>
<sequence length="247" mass="28794">MGGKKFGTNSKAEEARSKKAEVKKNENEKKQRDKEDKMWEETDTKILDKQKKQKEKEEKAREDAKKKQEAKELLQQEDKEIKERYGKPSDTKVTRFEIQQKRDKEQKQREKELASRPSDPRVVVVPTTTTTTTTTTTTTTGSDDHEEEDFNLEENMNHILREQRLKDGKDVIDARDINEAIGALSGNDGKEQHPERRMKAAFNAYEEENLPVLRKENPSLRLTQVKQLLWKNWLKAPENPFNQVGSQ</sequence>
<name>CC124_DICDI</name>
<evidence type="ECO:0000250" key="1">
    <source>
        <dbReference type="UniProtKB" id="Q96CT7"/>
    </source>
</evidence>
<evidence type="ECO:0000255" key="2"/>
<evidence type="ECO:0000256" key="3">
    <source>
        <dbReference type="SAM" id="MobiDB-lite"/>
    </source>
</evidence>
<evidence type="ECO:0000305" key="4"/>